<evidence type="ECO:0000255" key="1">
    <source>
        <dbReference type="HAMAP-Rule" id="MF_01612"/>
    </source>
</evidence>
<evidence type="ECO:0000255" key="2">
    <source>
        <dbReference type="PROSITE-ProRule" id="PRU01266"/>
    </source>
</evidence>
<name>COFH_SYNY3</name>
<protein>
    <recommendedName>
        <fullName evidence="1">5-amino-6-(D-ribitylamino)uracil--L-tyrosine 4-hydroxyphenyl transferase</fullName>
        <ecNumber evidence="1">2.5.1.147</ecNumber>
    </recommendedName>
    <alternativeName>
        <fullName evidence="1">FO synthase subunit 2</fullName>
    </alternativeName>
</protein>
<dbReference type="EC" id="2.5.1.147" evidence="1"/>
<dbReference type="EMBL" id="BA000022">
    <property type="protein sequence ID" value="BAA16826.1"/>
    <property type="molecule type" value="Genomic_DNA"/>
</dbReference>
<dbReference type="PIR" id="S74675">
    <property type="entry name" value="S74675"/>
</dbReference>
<dbReference type="SMR" id="P72811"/>
<dbReference type="IntAct" id="P72811">
    <property type="interactions" value="1"/>
</dbReference>
<dbReference type="STRING" id="1148.gene:10497684"/>
<dbReference type="PaxDb" id="1148-1651900"/>
<dbReference type="EnsemblBacteria" id="BAA16826">
    <property type="protein sequence ID" value="BAA16826"/>
    <property type="gene ID" value="BAA16826"/>
</dbReference>
<dbReference type="KEGG" id="syn:sll1659"/>
<dbReference type="eggNOG" id="COG1060">
    <property type="taxonomic scope" value="Bacteria"/>
</dbReference>
<dbReference type="InParanoid" id="P72811"/>
<dbReference type="PhylomeDB" id="P72811"/>
<dbReference type="UniPathway" id="UPA00072"/>
<dbReference type="Proteomes" id="UP000001425">
    <property type="component" value="Chromosome"/>
</dbReference>
<dbReference type="GO" id="GO:0051539">
    <property type="term" value="F:4 iron, 4 sulfur cluster binding"/>
    <property type="evidence" value="ECO:0007669"/>
    <property type="project" value="UniProtKB-KW"/>
</dbReference>
<dbReference type="GO" id="GO:0141093">
    <property type="term" value="F:5-amino-6-(D-ribitylamino)uracil--L-tyrosine 4-hydroxyphenyl transferase activity"/>
    <property type="evidence" value="ECO:0007669"/>
    <property type="project" value="UniProtKB-EC"/>
</dbReference>
<dbReference type="GO" id="GO:0044689">
    <property type="term" value="F:7,8-didemethyl-8-hydroxy-5-deazariboflavin synthase activity"/>
    <property type="evidence" value="ECO:0000318"/>
    <property type="project" value="GO_Central"/>
</dbReference>
<dbReference type="GO" id="GO:0005506">
    <property type="term" value="F:iron ion binding"/>
    <property type="evidence" value="ECO:0007669"/>
    <property type="project" value="UniProtKB-UniRule"/>
</dbReference>
<dbReference type="Gene3D" id="3.20.20.70">
    <property type="entry name" value="Aldolase class I"/>
    <property type="match status" value="1"/>
</dbReference>
<dbReference type="HAMAP" id="MF_01612">
    <property type="entry name" value="FO_synth_sub2"/>
    <property type="match status" value="1"/>
</dbReference>
<dbReference type="InterPro" id="IPR013785">
    <property type="entry name" value="Aldolase_TIM"/>
</dbReference>
<dbReference type="InterPro" id="IPR045567">
    <property type="entry name" value="CofH/MnqC-like_C"/>
</dbReference>
<dbReference type="InterPro" id="IPR019940">
    <property type="entry name" value="CofH_family"/>
</dbReference>
<dbReference type="InterPro" id="IPR034405">
    <property type="entry name" value="F420"/>
</dbReference>
<dbReference type="InterPro" id="IPR020050">
    <property type="entry name" value="FO_synthase_su2"/>
</dbReference>
<dbReference type="InterPro" id="IPR007197">
    <property type="entry name" value="rSAM"/>
</dbReference>
<dbReference type="NCBIfam" id="TIGR00423">
    <property type="entry name" value="CofH family radical SAM protein"/>
    <property type="match status" value="1"/>
</dbReference>
<dbReference type="NCBIfam" id="TIGR03551">
    <property type="entry name" value="F420_cofH"/>
    <property type="match status" value="1"/>
</dbReference>
<dbReference type="NCBIfam" id="NF005609">
    <property type="entry name" value="PRK07360.1"/>
    <property type="match status" value="1"/>
</dbReference>
<dbReference type="PANTHER" id="PTHR43076">
    <property type="entry name" value="FO SYNTHASE (COFH)"/>
    <property type="match status" value="1"/>
</dbReference>
<dbReference type="PANTHER" id="PTHR43076:SF1">
    <property type="entry name" value="LIPOYL SYNTHASE 2"/>
    <property type="match status" value="1"/>
</dbReference>
<dbReference type="Pfam" id="PF19288">
    <property type="entry name" value="CofH_C"/>
    <property type="match status" value="1"/>
</dbReference>
<dbReference type="Pfam" id="PF04055">
    <property type="entry name" value="Radical_SAM"/>
    <property type="match status" value="1"/>
</dbReference>
<dbReference type="PIRSF" id="PIRSF004762">
    <property type="entry name" value="CHP00423"/>
    <property type="match status" value="1"/>
</dbReference>
<dbReference type="SFLD" id="SFLDF00293">
    <property type="entry name" value="((2_3_4_5-tetrahydroxypentyl)a"/>
    <property type="match status" value="1"/>
</dbReference>
<dbReference type="SFLD" id="SFLDG01064">
    <property type="entry name" value="F420__menaquinone_cofactor_bio"/>
    <property type="match status" value="1"/>
</dbReference>
<dbReference type="SFLD" id="SFLDG01389">
    <property type="entry name" value="menaquinone_synthsis_involved"/>
    <property type="match status" value="1"/>
</dbReference>
<dbReference type="SUPFAM" id="SSF102114">
    <property type="entry name" value="Radical SAM enzymes"/>
    <property type="match status" value="1"/>
</dbReference>
<dbReference type="PROSITE" id="PS51918">
    <property type="entry name" value="RADICAL_SAM"/>
    <property type="match status" value="1"/>
</dbReference>
<comment type="function">
    <text evidence="1">Catalyzes the radical-mediated synthesis of 5-amino-5-(4-hydroxybenzyl)-6-(D-ribitylimino)-5,6-dihydrouracil from 5-amino-6-(D-ribitylamino)uracil and L-tyrosine.</text>
</comment>
<comment type="catalytic activity">
    <reaction evidence="1">
        <text>5-amino-6-(D-ribitylamino)uracil + L-tyrosine + S-adenosyl-L-methionine = 5-amino-5-(4-hydroxybenzyl)-6-(D-ribitylimino)-5,6-dihydrouracil + 2-iminoacetate + 5'-deoxyadenosine + L-methionine + H(+)</text>
        <dbReference type="Rhea" id="RHEA:55200"/>
        <dbReference type="ChEBI" id="CHEBI:15378"/>
        <dbReference type="ChEBI" id="CHEBI:15934"/>
        <dbReference type="ChEBI" id="CHEBI:17319"/>
        <dbReference type="ChEBI" id="CHEBI:57844"/>
        <dbReference type="ChEBI" id="CHEBI:58315"/>
        <dbReference type="ChEBI" id="CHEBI:59789"/>
        <dbReference type="ChEBI" id="CHEBI:77846"/>
        <dbReference type="ChEBI" id="CHEBI:85936"/>
        <dbReference type="EC" id="2.5.1.147"/>
    </reaction>
</comment>
<comment type="cofactor">
    <cofactor evidence="1">
        <name>[4Fe-4S] cluster</name>
        <dbReference type="ChEBI" id="CHEBI:49883"/>
    </cofactor>
    <text evidence="1">Binds 1 [4Fe-4S] cluster. The cluster is coordinated with 3 cysteines and an exchangeable S-adenosyl-L-methionine.</text>
</comment>
<comment type="pathway">
    <text evidence="1">Cofactor biosynthesis; coenzyme F0 biosynthesis.</text>
</comment>
<comment type="subunit">
    <text evidence="1">Consists of two subunits, CofG and CofH.</text>
</comment>
<comment type="similarity">
    <text evidence="1">Belongs to the radical SAM superfamily. CofH family.</text>
</comment>
<organism>
    <name type="scientific">Synechocystis sp. (strain ATCC 27184 / PCC 6803 / Kazusa)</name>
    <dbReference type="NCBI Taxonomy" id="1111708"/>
    <lineage>
        <taxon>Bacteria</taxon>
        <taxon>Bacillati</taxon>
        <taxon>Cyanobacteriota</taxon>
        <taxon>Cyanophyceae</taxon>
        <taxon>Synechococcales</taxon>
        <taxon>Merismopediaceae</taxon>
        <taxon>Synechocystis</taxon>
    </lineage>
</organism>
<feature type="chain" id="PRO_0000141712" description="5-amino-6-(D-ribitylamino)uracil--L-tyrosine 4-hydroxyphenyl transferase">
    <location>
        <begin position="1"/>
        <end position="392"/>
    </location>
</feature>
<feature type="domain" description="Radical SAM core" evidence="2">
    <location>
        <begin position="60"/>
        <end position="307"/>
    </location>
</feature>
<feature type="binding site" evidence="1">
    <location>
        <position position="74"/>
    </location>
    <ligand>
        <name>[4Fe-4S] cluster</name>
        <dbReference type="ChEBI" id="CHEBI:49883"/>
        <note>4Fe-4S-S-AdoMet</note>
    </ligand>
</feature>
<feature type="binding site" evidence="1">
    <location>
        <position position="78"/>
    </location>
    <ligand>
        <name>[4Fe-4S] cluster</name>
        <dbReference type="ChEBI" id="CHEBI:49883"/>
        <note>4Fe-4S-S-AdoMet</note>
    </ligand>
</feature>
<feature type="binding site" evidence="1">
    <location>
        <position position="81"/>
    </location>
    <ligand>
        <name>[4Fe-4S] cluster</name>
        <dbReference type="ChEBI" id="CHEBI:49883"/>
        <note>4Fe-4S-S-AdoMet</note>
    </ligand>
</feature>
<gene>
    <name evidence="1" type="primary">cofH</name>
    <name type="ordered locus">sll1659</name>
</gene>
<keyword id="KW-0004">4Fe-4S</keyword>
<keyword id="KW-0408">Iron</keyword>
<keyword id="KW-0411">Iron-sulfur</keyword>
<keyword id="KW-0479">Metal-binding</keyword>
<keyword id="KW-1185">Reference proteome</keyword>
<keyword id="KW-0949">S-adenosyl-L-methionine</keyword>
<keyword id="KW-0808">Transferase</keyword>
<proteinExistence type="inferred from homology"/>
<reference key="1">
    <citation type="journal article" date="1996" name="DNA Res.">
        <title>Sequence analysis of the genome of the unicellular cyanobacterium Synechocystis sp. strain PCC6803. II. Sequence determination of the entire genome and assignment of potential protein-coding regions.</title>
        <authorList>
            <person name="Kaneko T."/>
            <person name="Sato S."/>
            <person name="Kotani H."/>
            <person name="Tanaka A."/>
            <person name="Asamizu E."/>
            <person name="Nakamura Y."/>
            <person name="Miyajima N."/>
            <person name="Hirosawa M."/>
            <person name="Sugiura M."/>
            <person name="Sasamoto S."/>
            <person name="Kimura T."/>
            <person name="Hosouchi T."/>
            <person name="Matsuno A."/>
            <person name="Muraki A."/>
            <person name="Nakazaki N."/>
            <person name="Naruo K."/>
            <person name="Okumura S."/>
            <person name="Shimpo S."/>
            <person name="Takeuchi C."/>
            <person name="Wada T."/>
            <person name="Watanabe A."/>
            <person name="Yamada M."/>
            <person name="Yasuda M."/>
            <person name="Tabata S."/>
        </authorList>
    </citation>
    <scope>NUCLEOTIDE SEQUENCE [LARGE SCALE GENOMIC DNA]</scope>
    <source>
        <strain>ATCC 27184 / PCC 6803 / Kazusa</strain>
    </source>
</reference>
<accession>P72811</accession>
<sequence>MVLSTVNLTLIEELAAQALALEDLTPEQGLLLLQCDDPGGWEVIRQYGDRLRRKLVGETVTYVVNRNINFTNICEQHCNFCAFRRDDGQTGAYWLTDSEIFNKTKGAVAQGATEICLQGGLNPQAKINGSSLAYYVNLVETIKGQFPQLHLHGFSPQEIQFIARQDGLTYGEVLMALKFSGLDSLPGTAAEVLVDRVRRIICPEKIDSQTWLEIIGLAHRHGLPTTSTLMAGHVETPEEIITHLDRLRQRQQTSLAQGYAASITEFILLPFVGEKAPPSLRKRVGRDQPDLDQALQIMAIARLYLGKWIVNHQPSWVKLGLTGATTALEWGCNDLGGTLMEEHITTMAGAKGGTCLTATQLQNAIISTGRPYQQRTTLYEHLNANLNKIGLK</sequence>